<organism>
    <name type="scientific">Homo sapiens</name>
    <name type="common">Human</name>
    <dbReference type="NCBI Taxonomy" id="9606"/>
    <lineage>
        <taxon>Eukaryota</taxon>
        <taxon>Metazoa</taxon>
        <taxon>Chordata</taxon>
        <taxon>Craniata</taxon>
        <taxon>Vertebrata</taxon>
        <taxon>Euteleostomi</taxon>
        <taxon>Mammalia</taxon>
        <taxon>Eutheria</taxon>
        <taxon>Euarchontoglires</taxon>
        <taxon>Primates</taxon>
        <taxon>Haplorrhini</taxon>
        <taxon>Catarrhini</taxon>
        <taxon>Hominidae</taxon>
        <taxon>Homo</taxon>
    </lineage>
</organism>
<gene>
    <name type="primary">RAP1GAP2</name>
    <name type="synonym">GARNL4</name>
    <name type="synonym">KIAA1039</name>
    <name type="synonym">RAP1GA2</name>
</gene>
<protein>
    <recommendedName>
        <fullName>Rap1 GTPase-activating protein 2</fullName>
        <shortName>Rap1GAP2</shortName>
    </recommendedName>
    <alternativeName>
        <fullName>GTPase-activating Rap/Ran-GAP domain-like protein 4</fullName>
    </alternativeName>
</protein>
<proteinExistence type="evidence at protein level"/>
<sequence length="730" mass="80056">MFGRKRSVSFGGFGWIDKTMLASLKVKKQELANSSDATLPDRPLSPPLTAPPTMKSSEFFEMLEKMQGIKLEEQKPGPQKNKDDYIPYPSIDEVVEKGGPYPQVILPQFGGYWIEDPENVGTPTSLGSSICEEEEEDNLSPNTFGYKLECKGEARAYRRHFLGKDHLNFYCTGSSLGNLILSVKCEEAEGIEYLRVILRSKLKTVHERIPLAGLSKLPSVPQIAKAFCDDAVGLRFNPVLYPKASQMIVSYDEHEVNNTFKFGVIYQKARQTLEEELFGNNEESPAFKEFLDLLGDTITLQDFKGFRGGLDVTHGQTGVESVYTTFRDREIMFHVSTKLPFTDGDAQQLQRKRHIGNDIVAIIFQEENTPFVPDMIASNFLHAYIVVQVETPGTETPSYKVSVTAREDVPTFGPPLPSPPVFQKGPEFREFLLTKLTNAENACCKSDKFAKLEDRTRAALLDNLHDELHAHTQAMLGLGPEEDKFENGGHGGFLESFKRAIRVRSHSMETMVGGQKKSHSGGIPGSLSGGISHNSMEVTKTTFSPPVVAATVKNQSRSPIKRRSGLFPRLHTGSEGQGDSRARCDSTSSTPKTPDGGHSSQEIKSETSSNPSSPEICPNKEKPFMKLKENGRAISRSSSSTSSVSSTAGEGEAMEEGDSGGSQPSTTSPFKQEVFVYSPSPSSESPSLGAAATPIIMSRSPTDAKSRNSPRSNLKFRFDKLSHASSGAGH</sequence>
<dbReference type="EMBL" id="AJ628446">
    <property type="protein sequence ID" value="CAF31652.1"/>
    <property type="molecule type" value="mRNA"/>
</dbReference>
<dbReference type="EMBL" id="AJ628447">
    <property type="protein sequence ID" value="CAF31653.1"/>
    <property type="molecule type" value="mRNA"/>
</dbReference>
<dbReference type="EMBL" id="AK124640">
    <property type="protein sequence ID" value="BAC85912.1"/>
    <property type="molecule type" value="mRNA"/>
</dbReference>
<dbReference type="EMBL" id="CR627427">
    <property type="protein sequence ID" value="CAH10514.1"/>
    <property type="molecule type" value="mRNA"/>
</dbReference>
<dbReference type="EMBL" id="BC140870">
    <property type="protein sequence ID" value="AAI40871.1"/>
    <property type="molecule type" value="mRNA"/>
</dbReference>
<dbReference type="EMBL" id="BC140871">
    <property type="protein sequence ID" value="AAI40872.1"/>
    <property type="molecule type" value="mRNA"/>
</dbReference>
<dbReference type="EMBL" id="AB028962">
    <property type="protein sequence ID" value="BAA82991.1"/>
    <property type="molecule type" value="mRNA"/>
</dbReference>
<dbReference type="CCDS" id="CCDS45573.1">
    <molecule id="Q684P5-1"/>
</dbReference>
<dbReference type="CCDS" id="CCDS45574.1">
    <molecule id="Q684P5-2"/>
</dbReference>
<dbReference type="CCDS" id="CCDS82035.1">
    <molecule id="Q684P5-3"/>
</dbReference>
<dbReference type="RefSeq" id="NP_001093868.1">
    <molecule id="Q684P5-2"/>
    <property type="nucleotide sequence ID" value="NM_001100398.2"/>
</dbReference>
<dbReference type="RefSeq" id="NP_001316987.1">
    <molecule id="Q684P5-3"/>
    <property type="nucleotide sequence ID" value="NM_001330058.2"/>
</dbReference>
<dbReference type="RefSeq" id="NP_055900.4">
    <molecule id="Q684P5-1"/>
    <property type="nucleotide sequence ID" value="NM_015085.4"/>
</dbReference>
<dbReference type="RefSeq" id="XP_011522043.1">
    <molecule id="Q684P5-3"/>
    <property type="nucleotide sequence ID" value="XM_011523741.3"/>
</dbReference>
<dbReference type="RefSeq" id="XP_016879859.1">
    <property type="nucleotide sequence ID" value="XM_017024370.1"/>
</dbReference>
<dbReference type="RefSeq" id="XP_047291624.1">
    <molecule id="Q684P5-3"/>
    <property type="nucleotide sequence ID" value="XM_047435668.1"/>
</dbReference>
<dbReference type="SMR" id="Q684P5"/>
<dbReference type="BioGRID" id="116732">
    <property type="interactions" value="10"/>
</dbReference>
<dbReference type="FunCoup" id="Q684P5">
    <property type="interactions" value="293"/>
</dbReference>
<dbReference type="IntAct" id="Q684P5">
    <property type="interactions" value="7"/>
</dbReference>
<dbReference type="STRING" id="9606.ENSP00000254695"/>
<dbReference type="GlyGen" id="Q684P5">
    <property type="glycosylation" value="1 site, 1 O-linked glycan (1 site)"/>
</dbReference>
<dbReference type="iPTMnet" id="Q684P5"/>
<dbReference type="PhosphoSitePlus" id="Q684P5"/>
<dbReference type="SwissPalm" id="Q684P5"/>
<dbReference type="BioMuta" id="RAP1GAP2"/>
<dbReference type="DMDM" id="162416269"/>
<dbReference type="jPOST" id="Q684P5"/>
<dbReference type="MassIVE" id="Q684P5"/>
<dbReference type="PaxDb" id="9606-ENSP00000254695"/>
<dbReference type="PeptideAtlas" id="Q684P5"/>
<dbReference type="ProteomicsDB" id="65988">
    <molecule id="Q684P5-1"/>
</dbReference>
<dbReference type="ProteomicsDB" id="65989">
    <molecule id="Q684P5-2"/>
</dbReference>
<dbReference type="ProteomicsDB" id="65990">
    <molecule id="Q684P5-3"/>
</dbReference>
<dbReference type="Antibodypedia" id="5443">
    <property type="antibodies" value="30 antibodies from 14 providers"/>
</dbReference>
<dbReference type="DNASU" id="23108"/>
<dbReference type="Ensembl" id="ENST00000254695.13">
    <molecule id="Q684P5-1"/>
    <property type="protein sequence ID" value="ENSP00000254695.8"/>
    <property type="gene ID" value="ENSG00000132359.17"/>
</dbReference>
<dbReference type="Ensembl" id="ENST00000366401.8">
    <molecule id="Q684P5-2"/>
    <property type="protein sequence ID" value="ENSP00000389824.2"/>
    <property type="gene ID" value="ENSG00000132359.17"/>
</dbReference>
<dbReference type="Ensembl" id="ENST00000540393.6">
    <molecule id="Q684P5-3"/>
    <property type="protein sequence ID" value="ENSP00000439688.2"/>
    <property type="gene ID" value="ENSG00000132359.17"/>
</dbReference>
<dbReference type="GeneID" id="23108"/>
<dbReference type="KEGG" id="hsa:23108"/>
<dbReference type="MANE-Select" id="ENST00000254695.13">
    <property type="protein sequence ID" value="ENSP00000254695.8"/>
    <property type="RefSeq nucleotide sequence ID" value="NM_015085.5"/>
    <property type="RefSeq protein sequence ID" value="NP_055900.4"/>
</dbReference>
<dbReference type="UCSC" id="uc010ckd.4">
    <molecule id="Q684P5-1"/>
    <property type="organism name" value="human"/>
</dbReference>
<dbReference type="AGR" id="HGNC:29176"/>
<dbReference type="CTD" id="23108"/>
<dbReference type="DisGeNET" id="23108"/>
<dbReference type="GeneCards" id="RAP1GAP2"/>
<dbReference type="HGNC" id="HGNC:29176">
    <property type="gene designation" value="RAP1GAP2"/>
</dbReference>
<dbReference type="HPA" id="ENSG00000132359">
    <property type="expression patterns" value="Tissue enhanced (bone marrow, pancreas)"/>
</dbReference>
<dbReference type="MIM" id="618714">
    <property type="type" value="gene"/>
</dbReference>
<dbReference type="neXtProt" id="NX_Q684P5"/>
<dbReference type="OpenTargets" id="ENSG00000132359"/>
<dbReference type="PharmGKB" id="PA165432528"/>
<dbReference type="VEuPathDB" id="HostDB:ENSG00000132359"/>
<dbReference type="eggNOG" id="KOG3686">
    <property type="taxonomic scope" value="Eukaryota"/>
</dbReference>
<dbReference type="GeneTree" id="ENSGT00940000160935"/>
<dbReference type="HOGENOM" id="CLU_010739_2_2_1"/>
<dbReference type="InParanoid" id="Q684P5"/>
<dbReference type="OMA" id="ICPNKEP"/>
<dbReference type="OrthoDB" id="2499658at2759"/>
<dbReference type="PAN-GO" id="Q684P5">
    <property type="GO annotations" value="4 GO annotations based on evolutionary models"/>
</dbReference>
<dbReference type="PhylomeDB" id="Q684P5"/>
<dbReference type="TreeFam" id="TF318626"/>
<dbReference type="PathwayCommons" id="Q684P5"/>
<dbReference type="Reactome" id="R-HSA-392517">
    <property type="pathway name" value="Rap1 signalling"/>
</dbReference>
<dbReference type="SignaLink" id="Q684P5"/>
<dbReference type="BioGRID-ORCS" id="23108">
    <property type="hits" value="6 hits in 1143 CRISPR screens"/>
</dbReference>
<dbReference type="CD-CODE" id="8C2F96ED">
    <property type="entry name" value="Centrosome"/>
</dbReference>
<dbReference type="ChiTaRS" id="RAP1GAP2">
    <property type="organism name" value="human"/>
</dbReference>
<dbReference type="GeneWiki" id="RAP1GAP2"/>
<dbReference type="GenomeRNAi" id="23108"/>
<dbReference type="Pharos" id="Q684P5">
    <property type="development level" value="Tbio"/>
</dbReference>
<dbReference type="PRO" id="PR:Q684P5"/>
<dbReference type="Proteomes" id="UP000005640">
    <property type="component" value="Chromosome 17"/>
</dbReference>
<dbReference type="RNAct" id="Q684P5">
    <property type="molecule type" value="protein"/>
</dbReference>
<dbReference type="Bgee" id="ENSG00000132359">
    <property type="expression patterns" value="Expressed in Brodmann (1909) area 23 and 171 other cell types or tissues"/>
</dbReference>
<dbReference type="ExpressionAtlas" id="Q684P5">
    <property type="expression patterns" value="baseline and differential"/>
</dbReference>
<dbReference type="GO" id="GO:0005813">
    <property type="term" value="C:centrosome"/>
    <property type="evidence" value="ECO:0000314"/>
    <property type="project" value="UniProtKB"/>
</dbReference>
<dbReference type="GO" id="GO:0005737">
    <property type="term" value="C:cytoplasm"/>
    <property type="evidence" value="ECO:0000318"/>
    <property type="project" value="GO_Central"/>
</dbReference>
<dbReference type="GO" id="GO:0005829">
    <property type="term" value="C:cytosol"/>
    <property type="evidence" value="ECO:0000314"/>
    <property type="project" value="HPA"/>
</dbReference>
<dbReference type="GO" id="GO:0031965">
    <property type="term" value="C:nuclear membrane"/>
    <property type="evidence" value="ECO:0000314"/>
    <property type="project" value="HPA"/>
</dbReference>
<dbReference type="GO" id="GO:0048471">
    <property type="term" value="C:perinuclear region of cytoplasm"/>
    <property type="evidence" value="ECO:0007669"/>
    <property type="project" value="UniProtKB-SubCell"/>
</dbReference>
<dbReference type="GO" id="GO:0005886">
    <property type="term" value="C:plasma membrane"/>
    <property type="evidence" value="ECO:0000316"/>
    <property type="project" value="GO_Central"/>
</dbReference>
<dbReference type="GO" id="GO:0005096">
    <property type="term" value="F:GTPase activator activity"/>
    <property type="evidence" value="ECO:0000269"/>
    <property type="project" value="Reactome"/>
</dbReference>
<dbReference type="GO" id="GO:0002250">
    <property type="term" value="P:adaptive immune response"/>
    <property type="evidence" value="ECO:0000304"/>
    <property type="project" value="Reactome"/>
</dbReference>
<dbReference type="GO" id="GO:0008361">
    <property type="term" value="P:regulation of cell size"/>
    <property type="evidence" value="ECO:0000315"/>
    <property type="project" value="GO_Central"/>
</dbReference>
<dbReference type="GO" id="GO:0051056">
    <property type="term" value="P:regulation of small GTPase mediated signal transduction"/>
    <property type="evidence" value="ECO:0007669"/>
    <property type="project" value="InterPro"/>
</dbReference>
<dbReference type="FunFam" id="3.40.50.11210:FF:000003">
    <property type="entry name" value="RAP1 GTPase activating protein 2"/>
    <property type="match status" value="1"/>
</dbReference>
<dbReference type="Gene3D" id="6.10.140.210">
    <property type="match status" value="1"/>
</dbReference>
<dbReference type="Gene3D" id="3.40.50.11210">
    <property type="entry name" value="Rap/Ran-GAP"/>
    <property type="match status" value="1"/>
</dbReference>
<dbReference type="InterPro" id="IPR035974">
    <property type="entry name" value="Rap/Ran-GAP_sf"/>
</dbReference>
<dbReference type="InterPro" id="IPR000331">
    <property type="entry name" value="Rap/Ran_GAP_dom"/>
</dbReference>
<dbReference type="InterPro" id="IPR050989">
    <property type="entry name" value="Rap1_Ran_GAP"/>
</dbReference>
<dbReference type="PANTHER" id="PTHR15711">
    <property type="entry name" value="RAP GTPASE-ACTIVATING PROTEIN"/>
    <property type="match status" value="1"/>
</dbReference>
<dbReference type="PANTHER" id="PTHR15711:SF17">
    <property type="entry name" value="RAP1 GTPASE-ACTIVATING PROTEIN 2"/>
    <property type="match status" value="1"/>
</dbReference>
<dbReference type="Pfam" id="PF21022">
    <property type="entry name" value="Rap-GAP_dimer"/>
    <property type="match status" value="1"/>
</dbReference>
<dbReference type="Pfam" id="PF02145">
    <property type="entry name" value="Rap_GAP"/>
    <property type="match status" value="1"/>
</dbReference>
<dbReference type="SUPFAM" id="SSF111347">
    <property type="entry name" value="Rap/Ran-GAP"/>
    <property type="match status" value="1"/>
</dbReference>
<dbReference type="PROSITE" id="PS50085">
    <property type="entry name" value="RAPGAP"/>
    <property type="match status" value="1"/>
</dbReference>
<feature type="chain" id="PRO_0000312716" description="Rap1 GTPase-activating protein 2">
    <location>
        <begin position="1"/>
        <end position="730"/>
    </location>
</feature>
<feature type="domain" description="Rap-GAP" evidence="2">
    <location>
        <begin position="248"/>
        <end position="464"/>
    </location>
</feature>
<feature type="region of interest" description="Disordered" evidence="3">
    <location>
        <begin position="32"/>
        <end position="53"/>
    </location>
</feature>
<feature type="region of interest" description="Disordered" evidence="3">
    <location>
        <begin position="509"/>
        <end position="533"/>
    </location>
</feature>
<feature type="region of interest" description="Disordered" evidence="3">
    <location>
        <begin position="552"/>
        <end position="730"/>
    </location>
</feature>
<feature type="compositionally biased region" description="Polar residues" evidence="3">
    <location>
        <begin position="585"/>
        <end position="613"/>
    </location>
</feature>
<feature type="compositionally biased region" description="Basic and acidic residues" evidence="3">
    <location>
        <begin position="618"/>
        <end position="631"/>
    </location>
</feature>
<feature type="compositionally biased region" description="Low complexity" evidence="3">
    <location>
        <begin position="635"/>
        <end position="647"/>
    </location>
</feature>
<feature type="compositionally biased region" description="Polar residues" evidence="3">
    <location>
        <begin position="661"/>
        <end position="670"/>
    </location>
</feature>
<feature type="compositionally biased region" description="Low complexity" evidence="3">
    <location>
        <begin position="678"/>
        <end position="687"/>
    </location>
</feature>
<feature type="compositionally biased region" description="Polar residues" evidence="3">
    <location>
        <begin position="699"/>
        <end position="712"/>
    </location>
</feature>
<feature type="modified residue" description="Phosphoserine; by PKG/PRKG1; in vitro" evidence="4">
    <location>
        <position position="7"/>
    </location>
</feature>
<feature type="modified residue" description="Phosphoserine" evidence="10 11">
    <location>
        <position position="45"/>
    </location>
</feature>
<feature type="modified residue" description="Phosphothreonine" evidence="10 11">
    <location>
        <position position="49"/>
    </location>
</feature>
<feature type="modified residue" description="Phosphoserine" evidence="1">
    <location>
        <position position="507"/>
    </location>
</feature>
<feature type="modified residue" description="Phosphoserine" evidence="9 11">
    <location>
        <position position="544"/>
    </location>
</feature>
<feature type="modified residue" description="Phosphoserine" evidence="12">
    <location>
        <position position="558"/>
    </location>
</feature>
<feature type="modified residue" description="Phosphoserine" evidence="12">
    <location>
        <position position="564"/>
    </location>
</feature>
<feature type="modified residue" description="Phosphoserine" evidence="1">
    <location>
        <position position="612"/>
    </location>
</feature>
<feature type="modified residue" description="Phosphoserine" evidence="1">
    <location>
        <position position="613"/>
    </location>
</feature>
<feature type="splice variant" id="VSP_029888" description="In isoform 3." evidence="5 7">
    <location>
        <begin position="1"/>
        <end position="19"/>
    </location>
</feature>
<feature type="splice variant" id="VSP_029889" description="In isoform 2." evidence="6">
    <location>
        <begin position="68"/>
        <end position="82"/>
    </location>
</feature>
<feature type="sequence variant" id="VAR_037553" description="In dbSNP:rs17762452.">
    <original>L</original>
    <variation>M</variation>
    <location>
        <position position="202"/>
    </location>
</feature>
<feature type="mutagenesis site" description="Abolishes phosphorylation by PKG/PRKG1." evidence="4">
    <original>S</original>
    <variation>A</variation>
    <location>
        <position position="7"/>
    </location>
</feature>
<feature type="mutagenesis site" description="Abolishes GAP activity." evidence="4">
    <original>N</original>
    <variation>A</variation>
    <location>
        <position position="357"/>
    </location>
</feature>
<feature type="sequence conflict" description="In Ref. 2; BAC85912." evidence="8" ref="2">
    <original>P</original>
    <variation>L</variation>
    <location>
        <position position="285"/>
    </location>
</feature>
<feature type="sequence conflict" description="In Ref. 1; CAF31652/CAF31653." evidence="8" ref="1">
    <original>K</original>
    <variation>N</variation>
    <location>
        <position position="304"/>
    </location>
</feature>
<feature type="sequence conflict" description="In Ref. 3; CAH10514." evidence="8" ref="3">
    <original>S</original>
    <variation>P</variation>
    <location>
        <position position="726"/>
    </location>
</feature>
<evidence type="ECO:0000250" key="1">
    <source>
        <dbReference type="UniProtKB" id="Q5SVL6"/>
    </source>
</evidence>
<evidence type="ECO:0000255" key="2">
    <source>
        <dbReference type="PROSITE-ProRule" id="PRU00165"/>
    </source>
</evidence>
<evidence type="ECO:0000256" key="3">
    <source>
        <dbReference type="SAM" id="MobiDB-lite"/>
    </source>
</evidence>
<evidence type="ECO:0000269" key="4">
    <source>
    </source>
</evidence>
<evidence type="ECO:0000303" key="5">
    <source>
    </source>
</evidence>
<evidence type="ECO:0000303" key="6">
    <source>
    </source>
</evidence>
<evidence type="ECO:0000303" key="7">
    <source>
    </source>
</evidence>
<evidence type="ECO:0000305" key="8"/>
<evidence type="ECO:0007744" key="9">
    <source>
    </source>
</evidence>
<evidence type="ECO:0007744" key="10">
    <source>
    </source>
</evidence>
<evidence type="ECO:0007744" key="11">
    <source>
    </source>
</evidence>
<evidence type="ECO:0007744" key="12">
    <source>
    </source>
</evidence>
<reference key="1">
    <citation type="journal article" date="2005" name="Blood">
        <title>Rap1GAP2 is a new GTPase-activating protein of Rap1 expressed in human platelets.</title>
        <authorList>
            <person name="Schultess J."/>
            <person name="Danielewski O."/>
            <person name="Smolenski A.P."/>
        </authorList>
    </citation>
    <scope>NUCLEOTIDE SEQUENCE [MRNA] (ISOFORMS 1 AND 2)</scope>
    <scope>FUNCTION</scope>
    <scope>PHOSPHORYLATION AT SER-7</scope>
    <scope>SUBCELLULAR LOCATION</scope>
    <scope>TISSUE SPECIFICITY</scope>
    <scope>MUTAGENESIS OF SER-7 AND ASN-357</scope>
</reference>
<reference key="2">
    <citation type="journal article" date="2004" name="Nat. Genet.">
        <title>Complete sequencing and characterization of 21,243 full-length human cDNAs.</title>
        <authorList>
            <person name="Ota T."/>
            <person name="Suzuki Y."/>
            <person name="Nishikawa T."/>
            <person name="Otsuki T."/>
            <person name="Sugiyama T."/>
            <person name="Irie R."/>
            <person name="Wakamatsu A."/>
            <person name="Hayashi K."/>
            <person name="Sato H."/>
            <person name="Nagai K."/>
            <person name="Kimura K."/>
            <person name="Makita H."/>
            <person name="Sekine M."/>
            <person name="Obayashi M."/>
            <person name="Nishi T."/>
            <person name="Shibahara T."/>
            <person name="Tanaka T."/>
            <person name="Ishii S."/>
            <person name="Yamamoto J."/>
            <person name="Saito K."/>
            <person name="Kawai Y."/>
            <person name="Isono Y."/>
            <person name="Nakamura Y."/>
            <person name="Nagahari K."/>
            <person name="Murakami K."/>
            <person name="Yasuda T."/>
            <person name="Iwayanagi T."/>
            <person name="Wagatsuma M."/>
            <person name="Shiratori A."/>
            <person name="Sudo H."/>
            <person name="Hosoiri T."/>
            <person name="Kaku Y."/>
            <person name="Kodaira H."/>
            <person name="Kondo H."/>
            <person name="Sugawara M."/>
            <person name="Takahashi M."/>
            <person name="Kanda K."/>
            <person name="Yokoi T."/>
            <person name="Furuya T."/>
            <person name="Kikkawa E."/>
            <person name="Omura Y."/>
            <person name="Abe K."/>
            <person name="Kamihara K."/>
            <person name="Katsuta N."/>
            <person name="Sato K."/>
            <person name="Tanikawa M."/>
            <person name="Yamazaki M."/>
            <person name="Ninomiya K."/>
            <person name="Ishibashi T."/>
            <person name="Yamashita H."/>
            <person name="Murakawa K."/>
            <person name="Fujimori K."/>
            <person name="Tanai H."/>
            <person name="Kimata M."/>
            <person name="Watanabe M."/>
            <person name="Hiraoka S."/>
            <person name="Chiba Y."/>
            <person name="Ishida S."/>
            <person name="Ono Y."/>
            <person name="Takiguchi S."/>
            <person name="Watanabe S."/>
            <person name="Yosida M."/>
            <person name="Hotuta T."/>
            <person name="Kusano J."/>
            <person name="Kanehori K."/>
            <person name="Takahashi-Fujii A."/>
            <person name="Hara H."/>
            <person name="Tanase T.-O."/>
            <person name="Nomura Y."/>
            <person name="Togiya S."/>
            <person name="Komai F."/>
            <person name="Hara R."/>
            <person name="Takeuchi K."/>
            <person name="Arita M."/>
            <person name="Imose N."/>
            <person name="Musashino K."/>
            <person name="Yuuki H."/>
            <person name="Oshima A."/>
            <person name="Sasaki N."/>
            <person name="Aotsuka S."/>
            <person name="Yoshikawa Y."/>
            <person name="Matsunawa H."/>
            <person name="Ichihara T."/>
            <person name="Shiohata N."/>
            <person name="Sano S."/>
            <person name="Moriya S."/>
            <person name="Momiyama H."/>
            <person name="Satoh N."/>
            <person name="Takami S."/>
            <person name="Terashima Y."/>
            <person name="Suzuki O."/>
            <person name="Nakagawa S."/>
            <person name="Senoh A."/>
            <person name="Mizoguchi H."/>
            <person name="Goto Y."/>
            <person name="Shimizu F."/>
            <person name="Wakebe H."/>
            <person name="Hishigaki H."/>
            <person name="Watanabe T."/>
            <person name="Sugiyama A."/>
            <person name="Takemoto M."/>
            <person name="Kawakami B."/>
            <person name="Yamazaki M."/>
            <person name="Watanabe K."/>
            <person name="Kumagai A."/>
            <person name="Itakura S."/>
            <person name="Fukuzumi Y."/>
            <person name="Fujimori Y."/>
            <person name="Komiyama M."/>
            <person name="Tashiro H."/>
            <person name="Tanigami A."/>
            <person name="Fujiwara T."/>
            <person name="Ono T."/>
            <person name="Yamada K."/>
            <person name="Fujii Y."/>
            <person name="Ozaki K."/>
            <person name="Hirao M."/>
            <person name="Ohmori Y."/>
            <person name="Kawabata A."/>
            <person name="Hikiji T."/>
            <person name="Kobatake N."/>
            <person name="Inagaki H."/>
            <person name="Ikema Y."/>
            <person name="Okamoto S."/>
            <person name="Okitani R."/>
            <person name="Kawakami T."/>
            <person name="Noguchi S."/>
            <person name="Itoh T."/>
            <person name="Shigeta K."/>
            <person name="Senba T."/>
            <person name="Matsumura K."/>
            <person name="Nakajima Y."/>
            <person name="Mizuno T."/>
            <person name="Morinaga M."/>
            <person name="Sasaki M."/>
            <person name="Togashi T."/>
            <person name="Oyama M."/>
            <person name="Hata H."/>
            <person name="Watanabe M."/>
            <person name="Komatsu T."/>
            <person name="Mizushima-Sugano J."/>
            <person name="Satoh T."/>
            <person name="Shirai Y."/>
            <person name="Takahashi Y."/>
            <person name="Nakagawa K."/>
            <person name="Okumura K."/>
            <person name="Nagase T."/>
            <person name="Nomura N."/>
            <person name="Kikuchi H."/>
            <person name="Masuho Y."/>
            <person name="Yamashita R."/>
            <person name="Nakai K."/>
            <person name="Yada T."/>
            <person name="Nakamura Y."/>
            <person name="Ohara O."/>
            <person name="Isogai T."/>
            <person name="Sugano S."/>
        </authorList>
    </citation>
    <scope>NUCLEOTIDE SEQUENCE [LARGE SCALE MRNA] (ISOFORM 3)</scope>
    <source>
        <tissue>Cerebellum</tissue>
    </source>
</reference>
<reference key="3">
    <citation type="journal article" date="2007" name="BMC Genomics">
        <title>The full-ORF clone resource of the German cDNA consortium.</title>
        <authorList>
            <person name="Bechtel S."/>
            <person name="Rosenfelder H."/>
            <person name="Duda A."/>
            <person name="Schmidt C.P."/>
            <person name="Ernst U."/>
            <person name="Wellenreuther R."/>
            <person name="Mehrle A."/>
            <person name="Schuster C."/>
            <person name="Bahr A."/>
            <person name="Bloecker H."/>
            <person name="Heubner D."/>
            <person name="Hoerlein A."/>
            <person name="Michel G."/>
            <person name="Wedler H."/>
            <person name="Koehrer K."/>
            <person name="Ottenwaelder B."/>
            <person name="Poustka A."/>
            <person name="Wiemann S."/>
            <person name="Schupp I."/>
        </authorList>
    </citation>
    <scope>NUCLEOTIDE SEQUENCE [LARGE SCALE MRNA] (ISOFORM 3)</scope>
    <source>
        <tissue>Cervix</tissue>
    </source>
</reference>
<reference key="4">
    <citation type="journal article" date="2004" name="Genome Res.">
        <title>The status, quality, and expansion of the NIH full-length cDNA project: the Mammalian Gene Collection (MGC).</title>
        <authorList>
            <consortium name="The MGC Project Team"/>
        </authorList>
    </citation>
    <scope>NUCLEOTIDE SEQUENCE [LARGE SCALE MRNA] (ISOFORM 1)</scope>
</reference>
<reference key="5">
    <citation type="journal article" date="1999" name="DNA Res.">
        <title>Prediction of the coding sequences of unidentified human genes. XIV. The complete sequences of 100 new cDNA clones from brain which code for large proteins in vitro.</title>
        <authorList>
            <person name="Kikuno R."/>
            <person name="Nagase T."/>
            <person name="Ishikawa K."/>
            <person name="Hirosawa M."/>
            <person name="Miyajima N."/>
            <person name="Tanaka A."/>
            <person name="Kotani H."/>
            <person name="Nomura N."/>
            <person name="Ohara O."/>
        </authorList>
    </citation>
    <scope>NUCLEOTIDE SEQUENCE [LARGE SCALE MRNA] OF 287-730</scope>
    <source>
        <tissue>Brain</tissue>
    </source>
</reference>
<reference key="6">
    <citation type="journal article" date="2006" name="Nat. Biotechnol.">
        <title>A probability-based approach for high-throughput protein phosphorylation analysis and site localization.</title>
        <authorList>
            <person name="Beausoleil S.A."/>
            <person name="Villen J."/>
            <person name="Gerber S.A."/>
            <person name="Rush J."/>
            <person name="Gygi S.P."/>
        </authorList>
    </citation>
    <scope>PHOSPHORYLATION [LARGE SCALE ANALYSIS] AT SER-544</scope>
    <scope>IDENTIFICATION BY MASS SPECTROMETRY [LARGE SCALE ANALYSIS]</scope>
    <source>
        <tissue>Cervix carcinoma</tissue>
    </source>
</reference>
<reference key="7">
    <citation type="journal article" date="2008" name="Proc. Natl. Acad. Sci. U.S.A.">
        <title>A quantitative atlas of mitotic phosphorylation.</title>
        <authorList>
            <person name="Dephoure N."/>
            <person name="Zhou C."/>
            <person name="Villen J."/>
            <person name="Beausoleil S.A."/>
            <person name="Bakalarski C.E."/>
            <person name="Elledge S.J."/>
            <person name="Gygi S.P."/>
        </authorList>
    </citation>
    <scope>PHOSPHORYLATION [LARGE SCALE ANALYSIS] AT SER-45 AND THR-49</scope>
    <scope>IDENTIFICATION BY MASS SPECTROMETRY [LARGE SCALE ANALYSIS]</scope>
    <source>
        <tissue>Cervix carcinoma</tissue>
    </source>
</reference>
<reference key="8">
    <citation type="journal article" date="2009" name="Sci. Signal.">
        <title>Quantitative phosphoproteomic analysis of T cell receptor signaling reveals system-wide modulation of protein-protein interactions.</title>
        <authorList>
            <person name="Mayya V."/>
            <person name="Lundgren D.H."/>
            <person name="Hwang S.-I."/>
            <person name="Rezaul K."/>
            <person name="Wu L."/>
            <person name="Eng J.K."/>
            <person name="Rodionov V."/>
            <person name="Han D.K."/>
        </authorList>
    </citation>
    <scope>PHOSPHORYLATION [LARGE SCALE ANALYSIS] AT SER-45; THR-49 AND SER-544</scope>
    <scope>IDENTIFICATION BY MASS SPECTROMETRY [LARGE SCALE ANALYSIS]</scope>
    <source>
        <tissue>Leukemic T-cell</tissue>
    </source>
</reference>
<reference key="9">
    <citation type="journal article" date="2011" name="Sci. Signal.">
        <title>System-wide temporal characterization of the proteome and phosphoproteome of human embryonic stem cell differentiation.</title>
        <authorList>
            <person name="Rigbolt K.T."/>
            <person name="Prokhorova T.A."/>
            <person name="Akimov V."/>
            <person name="Henningsen J."/>
            <person name="Johansen P.T."/>
            <person name="Kratchmarova I."/>
            <person name="Kassem M."/>
            <person name="Mann M."/>
            <person name="Olsen J.V."/>
            <person name="Blagoev B."/>
        </authorList>
    </citation>
    <scope>PHOSPHORYLATION [LARGE SCALE ANALYSIS] AT SER-558 AND SER-564</scope>
    <scope>IDENTIFICATION BY MASS SPECTROMETRY [LARGE SCALE ANALYSIS]</scope>
</reference>
<reference key="10">
    <citation type="journal article" date="2014" name="J. Proteomics">
        <title>An enzyme assisted RP-RPLC approach for in-depth analysis of human liver phosphoproteome.</title>
        <authorList>
            <person name="Bian Y."/>
            <person name="Song C."/>
            <person name="Cheng K."/>
            <person name="Dong M."/>
            <person name="Wang F."/>
            <person name="Huang J."/>
            <person name="Sun D."/>
            <person name="Wang L."/>
            <person name="Ye M."/>
            <person name="Zou H."/>
        </authorList>
    </citation>
    <scope>IDENTIFICATION BY MASS SPECTROMETRY [LARGE SCALE ANALYSIS]</scope>
    <source>
        <tissue>Liver</tissue>
    </source>
</reference>
<name>RPGP2_HUMAN</name>
<accession>Q684P5</accession>
<accession>B2RTY5</accession>
<accession>Q684P4</accession>
<accession>Q6AI00</accession>
<accession>Q6ZVF0</accession>
<accession>Q9UPW2</accession>
<keyword id="KW-0025">Alternative splicing</keyword>
<keyword id="KW-0963">Cytoplasm</keyword>
<keyword id="KW-0343">GTPase activation</keyword>
<keyword id="KW-0597">Phosphoprotein</keyword>
<keyword id="KW-1267">Proteomics identification</keyword>
<keyword id="KW-1185">Reference proteome</keyword>
<comment type="function">
    <text evidence="4">GTPase activator for the nuclear Ras-related regulatory protein RAP-1A (KREV-1), converting it to the putatively inactive GDP-bound state.</text>
</comment>
<comment type="interaction">
    <interactant intactId="EBI-3452992">
        <id>Q684P5</id>
    </interactant>
    <interactant intactId="EBI-16439278">
        <id>Q6FHY5</id>
        <label>MEOX2</label>
    </interactant>
    <organismsDiffer>false</organismsDiffer>
    <experiments>3</experiments>
</comment>
<comment type="interaction">
    <interactant intactId="EBI-3452992">
        <id>Q684P5</id>
    </interactant>
    <interactant intactId="EBI-722307">
        <id>P47736</id>
        <label>RAP1GAP</label>
    </interactant>
    <organismsDiffer>false</organismsDiffer>
    <experiments>2</experiments>
</comment>
<comment type="subcellular location">
    <subcellularLocation>
        <location evidence="4">Cytoplasm</location>
    </subcellularLocation>
    <subcellularLocation>
        <location evidence="4">Cytoplasm</location>
        <location evidence="4">Perinuclear region</location>
    </subcellularLocation>
</comment>
<comment type="alternative products">
    <event type="alternative splicing"/>
    <isoform>
        <id>Q684P5-1</id>
        <name>1</name>
        <name>Rap1GAP2b</name>
        <sequence type="displayed"/>
    </isoform>
    <isoform>
        <id>Q684P5-2</id>
        <name>2</name>
        <name>Rap1GAP2a</name>
        <sequence type="described" ref="VSP_029889"/>
    </isoform>
    <isoform>
        <id>Q684P5-3</id>
        <name>3</name>
        <name>Rap1GAP2c</name>
        <sequence type="described" ref="VSP_029888"/>
    </isoform>
</comment>
<comment type="tissue specificity">
    <text evidence="4">Isoform 1 and isoform 2 are expressed in platelets with isoform 2 being the predominant form. Expressed in lymphocytes, heart, testis and pancreas.</text>
</comment>
<comment type="PTM">
    <text evidence="4">In vitro phosphorylated by cGMP-dependent protein kinase 1 (cGKI) at Ser-7; the phosphorylation probably does not regulate GAP activity.</text>
</comment>